<organism>
    <name type="scientific">Methylobacterium sp. (strain 4-46)</name>
    <dbReference type="NCBI Taxonomy" id="426117"/>
    <lineage>
        <taxon>Bacteria</taxon>
        <taxon>Pseudomonadati</taxon>
        <taxon>Pseudomonadota</taxon>
        <taxon>Alphaproteobacteria</taxon>
        <taxon>Hyphomicrobiales</taxon>
        <taxon>Methylobacteriaceae</taxon>
        <taxon>Methylobacterium</taxon>
    </lineage>
</organism>
<sequence length="239" mass="26021">MLTRKQLDLLRFIQQRMRETGVPPSFDEMKDALDLKSKSGIHRLITALEERGFLRRLPNRARAIEVIRIPEAVASGPAEVVRFTPSVVEGGRSSAPVKPAPLPTALVSDESGHAVSIPVMGRIAAGTPISAIQSQSRSVAMSPDFLAGGEHYALEVRGDSMIEAGILDGDLVVIRRQDTANTGDIVVALIDDEEATLKRLRRRGSSIALEAANPAYETRVLGPDRVRIQGRLVSLIRKY</sequence>
<evidence type="ECO:0000255" key="1">
    <source>
        <dbReference type="HAMAP-Rule" id="MF_00015"/>
    </source>
</evidence>
<accession>B0UGH4</accession>
<keyword id="KW-0068">Autocatalytic cleavage</keyword>
<keyword id="KW-0227">DNA damage</keyword>
<keyword id="KW-0234">DNA repair</keyword>
<keyword id="KW-0235">DNA replication</keyword>
<keyword id="KW-0238">DNA-binding</keyword>
<keyword id="KW-0378">Hydrolase</keyword>
<keyword id="KW-0678">Repressor</keyword>
<keyword id="KW-0742">SOS response</keyword>
<keyword id="KW-0804">Transcription</keyword>
<keyword id="KW-0805">Transcription regulation</keyword>
<proteinExistence type="inferred from homology"/>
<gene>
    <name evidence="1" type="primary">lexA</name>
    <name type="ordered locus">M446_6716</name>
</gene>
<name>LEXA_METS4</name>
<feature type="chain" id="PRO_1000089579" description="LexA repressor">
    <location>
        <begin position="1"/>
        <end position="239"/>
    </location>
</feature>
<feature type="DNA-binding region" description="H-T-H motif" evidence="1">
    <location>
        <begin position="26"/>
        <end position="46"/>
    </location>
</feature>
<feature type="active site" description="For autocatalytic cleavage activity" evidence="1">
    <location>
        <position position="160"/>
    </location>
</feature>
<feature type="active site" description="For autocatalytic cleavage activity" evidence="1">
    <location>
        <position position="198"/>
    </location>
</feature>
<feature type="site" description="Cleavage; by autolysis" evidence="1">
    <location>
        <begin position="125"/>
        <end position="126"/>
    </location>
</feature>
<comment type="function">
    <text evidence="1">Represses a number of genes involved in the response to DNA damage (SOS response), including recA and lexA. In the presence of single-stranded DNA, RecA interacts with LexA causing an autocatalytic cleavage which disrupts the DNA-binding part of LexA, leading to derepression of the SOS regulon and eventually DNA repair.</text>
</comment>
<comment type="catalytic activity">
    <reaction evidence="1">
        <text>Hydrolysis of Ala-|-Gly bond in repressor LexA.</text>
        <dbReference type="EC" id="3.4.21.88"/>
    </reaction>
</comment>
<comment type="subunit">
    <text evidence="1">Homodimer.</text>
</comment>
<comment type="similarity">
    <text evidence="1">Belongs to the peptidase S24 family.</text>
</comment>
<dbReference type="EC" id="3.4.21.88" evidence="1"/>
<dbReference type="EMBL" id="CP000943">
    <property type="protein sequence ID" value="ACA20966.1"/>
    <property type="molecule type" value="Genomic_DNA"/>
</dbReference>
<dbReference type="RefSeq" id="WP_012336342.1">
    <property type="nucleotide sequence ID" value="NC_010511.1"/>
</dbReference>
<dbReference type="SMR" id="B0UGH4"/>
<dbReference type="STRING" id="426117.M446_6716"/>
<dbReference type="MEROPS" id="S24.001"/>
<dbReference type="KEGG" id="met:M446_6716"/>
<dbReference type="eggNOG" id="COG1974">
    <property type="taxonomic scope" value="Bacteria"/>
</dbReference>
<dbReference type="HOGENOM" id="CLU_066192_45_2_5"/>
<dbReference type="GO" id="GO:0003677">
    <property type="term" value="F:DNA binding"/>
    <property type="evidence" value="ECO:0007669"/>
    <property type="project" value="UniProtKB-UniRule"/>
</dbReference>
<dbReference type="GO" id="GO:0004252">
    <property type="term" value="F:serine-type endopeptidase activity"/>
    <property type="evidence" value="ECO:0007669"/>
    <property type="project" value="UniProtKB-UniRule"/>
</dbReference>
<dbReference type="GO" id="GO:0006281">
    <property type="term" value="P:DNA repair"/>
    <property type="evidence" value="ECO:0007669"/>
    <property type="project" value="UniProtKB-UniRule"/>
</dbReference>
<dbReference type="GO" id="GO:0006260">
    <property type="term" value="P:DNA replication"/>
    <property type="evidence" value="ECO:0007669"/>
    <property type="project" value="UniProtKB-UniRule"/>
</dbReference>
<dbReference type="GO" id="GO:0045892">
    <property type="term" value="P:negative regulation of DNA-templated transcription"/>
    <property type="evidence" value="ECO:0007669"/>
    <property type="project" value="UniProtKB-UniRule"/>
</dbReference>
<dbReference type="GO" id="GO:0006508">
    <property type="term" value="P:proteolysis"/>
    <property type="evidence" value="ECO:0007669"/>
    <property type="project" value="InterPro"/>
</dbReference>
<dbReference type="GO" id="GO:0009432">
    <property type="term" value="P:SOS response"/>
    <property type="evidence" value="ECO:0007669"/>
    <property type="project" value="UniProtKB-UniRule"/>
</dbReference>
<dbReference type="CDD" id="cd06529">
    <property type="entry name" value="S24_LexA-like"/>
    <property type="match status" value="1"/>
</dbReference>
<dbReference type="FunFam" id="2.10.109.10:FF:000001">
    <property type="entry name" value="LexA repressor"/>
    <property type="match status" value="1"/>
</dbReference>
<dbReference type="Gene3D" id="2.10.109.10">
    <property type="entry name" value="Umud Fragment, subunit A"/>
    <property type="match status" value="1"/>
</dbReference>
<dbReference type="Gene3D" id="1.10.10.10">
    <property type="entry name" value="Winged helix-like DNA-binding domain superfamily/Winged helix DNA-binding domain"/>
    <property type="match status" value="1"/>
</dbReference>
<dbReference type="HAMAP" id="MF_00015">
    <property type="entry name" value="LexA"/>
    <property type="match status" value="1"/>
</dbReference>
<dbReference type="InterPro" id="IPR006200">
    <property type="entry name" value="LexA"/>
</dbReference>
<dbReference type="InterPro" id="IPR039418">
    <property type="entry name" value="LexA-like"/>
</dbReference>
<dbReference type="InterPro" id="IPR036286">
    <property type="entry name" value="LexA/Signal_pep-like_sf"/>
</dbReference>
<dbReference type="InterPro" id="IPR006199">
    <property type="entry name" value="LexA_DNA-bd_dom"/>
</dbReference>
<dbReference type="InterPro" id="IPR050077">
    <property type="entry name" value="LexA_repressor"/>
</dbReference>
<dbReference type="InterPro" id="IPR006197">
    <property type="entry name" value="Peptidase_S24_LexA"/>
</dbReference>
<dbReference type="InterPro" id="IPR015927">
    <property type="entry name" value="Peptidase_S24_S26A/B/C"/>
</dbReference>
<dbReference type="InterPro" id="IPR036388">
    <property type="entry name" value="WH-like_DNA-bd_sf"/>
</dbReference>
<dbReference type="InterPro" id="IPR036390">
    <property type="entry name" value="WH_DNA-bd_sf"/>
</dbReference>
<dbReference type="NCBIfam" id="TIGR00498">
    <property type="entry name" value="lexA"/>
    <property type="match status" value="1"/>
</dbReference>
<dbReference type="PANTHER" id="PTHR33516">
    <property type="entry name" value="LEXA REPRESSOR"/>
    <property type="match status" value="1"/>
</dbReference>
<dbReference type="PANTHER" id="PTHR33516:SF2">
    <property type="entry name" value="LEXA REPRESSOR-RELATED"/>
    <property type="match status" value="1"/>
</dbReference>
<dbReference type="Pfam" id="PF01726">
    <property type="entry name" value="LexA_DNA_bind"/>
    <property type="match status" value="1"/>
</dbReference>
<dbReference type="Pfam" id="PF00717">
    <property type="entry name" value="Peptidase_S24"/>
    <property type="match status" value="1"/>
</dbReference>
<dbReference type="PRINTS" id="PR00726">
    <property type="entry name" value="LEXASERPTASE"/>
</dbReference>
<dbReference type="SUPFAM" id="SSF51306">
    <property type="entry name" value="LexA/Signal peptidase"/>
    <property type="match status" value="1"/>
</dbReference>
<dbReference type="SUPFAM" id="SSF46785">
    <property type="entry name" value="Winged helix' DNA-binding domain"/>
    <property type="match status" value="1"/>
</dbReference>
<protein>
    <recommendedName>
        <fullName evidence="1">LexA repressor</fullName>
        <ecNumber evidence="1">3.4.21.88</ecNumber>
    </recommendedName>
</protein>
<reference key="1">
    <citation type="submission" date="2008-02" db="EMBL/GenBank/DDBJ databases">
        <title>Complete sequence of chromosome of Methylobacterium sp. 4-46.</title>
        <authorList>
            <consortium name="US DOE Joint Genome Institute"/>
            <person name="Copeland A."/>
            <person name="Lucas S."/>
            <person name="Lapidus A."/>
            <person name="Glavina del Rio T."/>
            <person name="Dalin E."/>
            <person name="Tice H."/>
            <person name="Bruce D."/>
            <person name="Goodwin L."/>
            <person name="Pitluck S."/>
            <person name="Chertkov O."/>
            <person name="Brettin T."/>
            <person name="Detter J.C."/>
            <person name="Han C."/>
            <person name="Kuske C.R."/>
            <person name="Schmutz J."/>
            <person name="Larimer F."/>
            <person name="Land M."/>
            <person name="Hauser L."/>
            <person name="Kyrpides N."/>
            <person name="Ivanova N."/>
            <person name="Marx C.J."/>
            <person name="Richardson P."/>
        </authorList>
    </citation>
    <scope>NUCLEOTIDE SEQUENCE [LARGE SCALE GENOMIC DNA]</scope>
    <source>
        <strain>4-46</strain>
    </source>
</reference>